<protein>
    <recommendedName>
        <fullName>Cytochrome b</fullName>
    </recommendedName>
    <alternativeName>
        <fullName>Complex III subunit 3</fullName>
    </alternativeName>
    <alternativeName>
        <fullName>Complex III subunit III</fullName>
    </alternativeName>
    <alternativeName>
        <fullName>Cytochrome b-c1 complex subunit 3</fullName>
    </alternativeName>
    <alternativeName>
        <fullName>Ubiquinol-cytochrome-c reductase complex cytochrome b subunit</fullName>
    </alternativeName>
</protein>
<feature type="chain" id="PRO_0000254974" description="Cytochrome b">
    <location>
        <begin position="1"/>
        <end position="379"/>
    </location>
</feature>
<feature type="transmembrane region" description="Helical" evidence="2">
    <location>
        <begin position="33"/>
        <end position="53"/>
    </location>
</feature>
<feature type="transmembrane region" description="Helical" evidence="2">
    <location>
        <begin position="77"/>
        <end position="98"/>
    </location>
</feature>
<feature type="transmembrane region" description="Helical" evidence="2">
    <location>
        <begin position="113"/>
        <end position="133"/>
    </location>
</feature>
<feature type="transmembrane region" description="Helical" evidence="2">
    <location>
        <begin position="178"/>
        <end position="198"/>
    </location>
</feature>
<feature type="transmembrane region" description="Helical" evidence="2">
    <location>
        <begin position="226"/>
        <end position="246"/>
    </location>
</feature>
<feature type="transmembrane region" description="Helical" evidence="2">
    <location>
        <begin position="288"/>
        <end position="308"/>
    </location>
</feature>
<feature type="transmembrane region" description="Helical" evidence="2">
    <location>
        <begin position="320"/>
        <end position="340"/>
    </location>
</feature>
<feature type="transmembrane region" description="Helical" evidence="2">
    <location>
        <begin position="347"/>
        <end position="367"/>
    </location>
</feature>
<feature type="binding site" description="axial binding residue" evidence="2">
    <location>
        <position position="83"/>
    </location>
    <ligand>
        <name>heme b</name>
        <dbReference type="ChEBI" id="CHEBI:60344"/>
        <label>b562</label>
    </ligand>
    <ligandPart>
        <name>Fe</name>
        <dbReference type="ChEBI" id="CHEBI:18248"/>
    </ligandPart>
</feature>
<feature type="binding site" description="axial binding residue" evidence="2">
    <location>
        <position position="97"/>
    </location>
    <ligand>
        <name>heme b</name>
        <dbReference type="ChEBI" id="CHEBI:60344"/>
        <label>b566</label>
    </ligand>
    <ligandPart>
        <name>Fe</name>
        <dbReference type="ChEBI" id="CHEBI:18248"/>
    </ligandPart>
</feature>
<feature type="binding site" description="axial binding residue" evidence="2">
    <location>
        <position position="182"/>
    </location>
    <ligand>
        <name>heme b</name>
        <dbReference type="ChEBI" id="CHEBI:60344"/>
        <label>b562</label>
    </ligand>
    <ligandPart>
        <name>Fe</name>
        <dbReference type="ChEBI" id="CHEBI:18248"/>
    </ligandPart>
</feature>
<feature type="binding site" description="axial binding residue" evidence="2">
    <location>
        <position position="196"/>
    </location>
    <ligand>
        <name>heme b</name>
        <dbReference type="ChEBI" id="CHEBI:60344"/>
        <label>b566</label>
    </ligand>
    <ligandPart>
        <name>Fe</name>
        <dbReference type="ChEBI" id="CHEBI:18248"/>
    </ligandPart>
</feature>
<feature type="binding site" evidence="2">
    <location>
        <position position="201"/>
    </location>
    <ligand>
        <name>a ubiquinone</name>
        <dbReference type="ChEBI" id="CHEBI:16389"/>
    </ligand>
</feature>
<feature type="sequence variant" description="In strain: Isolate MN 48041.">
    <original>Y</original>
    <variation>D</variation>
    <location>
        <position position="104"/>
    </location>
</feature>
<feature type="sequence variant" description="In strain: Isolate MN 48041.">
    <original>K</original>
    <variation>E</variation>
    <location>
        <position position="217"/>
    </location>
</feature>
<reference key="1">
    <citation type="journal article" date="2001" name="J. Mammal.">
        <title>Diversification in the genus Akodon (Rodentia: Sigmodontinae) in southeastern South America: mitochondrial DNA sequence analysis.</title>
        <authorList>
            <person name="Geise L."/>
            <person name="Smith M.F."/>
            <person name="Patton J.L."/>
        </authorList>
    </citation>
    <scope>NUCLEOTIDE SEQUENCE [GENOMIC DNA]</scope>
    <source>
        <strain>Isolate MN 48041</strain>
    </source>
</reference>
<reference key="2">
    <citation type="journal article" date="2003" name="Cladistics">
        <title>Phylogenetics of Sigmodontinae (Rodentia, Muroidea, Cricetidae), with special reference to the akodont group, and with additional comments on historical biogeography.</title>
        <authorList>
            <person name="D'Elia G."/>
        </authorList>
    </citation>
    <scope>NUCLEOTIDE SEQUENCE [GENOMIC DNA]</scope>
    <source>
        <strain>Isolate MN 48070</strain>
    </source>
</reference>
<name>CYB_AKOMY</name>
<gene>
    <name type="primary">MT-CYB</name>
    <name type="synonym">COB</name>
    <name type="synonym">CYTB</name>
    <name type="synonym">MTCYB</name>
</gene>
<geneLocation type="mitochondrion"/>
<accession>Q6WRH2</accession>
<accession>Q9GAR9</accession>
<dbReference type="EMBL" id="AF184054">
    <property type="protein sequence ID" value="AAG16968.2"/>
    <property type="molecule type" value="Genomic_DNA"/>
</dbReference>
<dbReference type="EMBL" id="AY273907">
    <property type="protein sequence ID" value="AAQ20024.1"/>
    <property type="molecule type" value="Genomic_DNA"/>
</dbReference>
<dbReference type="SMR" id="Q6WRH2"/>
<dbReference type="GO" id="GO:0005743">
    <property type="term" value="C:mitochondrial inner membrane"/>
    <property type="evidence" value="ECO:0007669"/>
    <property type="project" value="UniProtKB-SubCell"/>
</dbReference>
<dbReference type="GO" id="GO:0045275">
    <property type="term" value="C:respiratory chain complex III"/>
    <property type="evidence" value="ECO:0007669"/>
    <property type="project" value="InterPro"/>
</dbReference>
<dbReference type="GO" id="GO:0046872">
    <property type="term" value="F:metal ion binding"/>
    <property type="evidence" value="ECO:0007669"/>
    <property type="project" value="UniProtKB-KW"/>
</dbReference>
<dbReference type="GO" id="GO:0008121">
    <property type="term" value="F:ubiquinol-cytochrome-c reductase activity"/>
    <property type="evidence" value="ECO:0007669"/>
    <property type="project" value="InterPro"/>
</dbReference>
<dbReference type="GO" id="GO:0006122">
    <property type="term" value="P:mitochondrial electron transport, ubiquinol to cytochrome c"/>
    <property type="evidence" value="ECO:0007669"/>
    <property type="project" value="TreeGrafter"/>
</dbReference>
<dbReference type="CDD" id="cd00290">
    <property type="entry name" value="cytochrome_b_C"/>
    <property type="match status" value="1"/>
</dbReference>
<dbReference type="CDD" id="cd00284">
    <property type="entry name" value="Cytochrome_b_N"/>
    <property type="match status" value="1"/>
</dbReference>
<dbReference type="FunFam" id="1.20.810.10:FF:000002">
    <property type="entry name" value="Cytochrome b"/>
    <property type="match status" value="1"/>
</dbReference>
<dbReference type="Gene3D" id="1.20.810.10">
    <property type="entry name" value="Cytochrome Bc1 Complex, Chain C"/>
    <property type="match status" value="1"/>
</dbReference>
<dbReference type="InterPro" id="IPR005798">
    <property type="entry name" value="Cyt_b/b6_C"/>
</dbReference>
<dbReference type="InterPro" id="IPR036150">
    <property type="entry name" value="Cyt_b/b6_C_sf"/>
</dbReference>
<dbReference type="InterPro" id="IPR005797">
    <property type="entry name" value="Cyt_b/b6_N"/>
</dbReference>
<dbReference type="InterPro" id="IPR027387">
    <property type="entry name" value="Cytb/b6-like_sf"/>
</dbReference>
<dbReference type="InterPro" id="IPR030689">
    <property type="entry name" value="Cytochrome_b"/>
</dbReference>
<dbReference type="InterPro" id="IPR048260">
    <property type="entry name" value="Cytochrome_b_C_euk/bac"/>
</dbReference>
<dbReference type="InterPro" id="IPR048259">
    <property type="entry name" value="Cytochrome_b_N_euk/bac"/>
</dbReference>
<dbReference type="InterPro" id="IPR016174">
    <property type="entry name" value="Di-haem_cyt_TM"/>
</dbReference>
<dbReference type="PANTHER" id="PTHR19271">
    <property type="entry name" value="CYTOCHROME B"/>
    <property type="match status" value="1"/>
</dbReference>
<dbReference type="PANTHER" id="PTHR19271:SF16">
    <property type="entry name" value="CYTOCHROME B"/>
    <property type="match status" value="1"/>
</dbReference>
<dbReference type="Pfam" id="PF00032">
    <property type="entry name" value="Cytochrom_B_C"/>
    <property type="match status" value="1"/>
</dbReference>
<dbReference type="Pfam" id="PF00033">
    <property type="entry name" value="Cytochrome_B"/>
    <property type="match status" value="1"/>
</dbReference>
<dbReference type="PIRSF" id="PIRSF038885">
    <property type="entry name" value="COB"/>
    <property type="match status" value="1"/>
</dbReference>
<dbReference type="SUPFAM" id="SSF81648">
    <property type="entry name" value="a domain/subunit of cytochrome bc1 complex (Ubiquinol-cytochrome c reductase)"/>
    <property type="match status" value="1"/>
</dbReference>
<dbReference type="SUPFAM" id="SSF81342">
    <property type="entry name" value="Transmembrane di-heme cytochromes"/>
    <property type="match status" value="1"/>
</dbReference>
<dbReference type="PROSITE" id="PS51003">
    <property type="entry name" value="CYTB_CTER"/>
    <property type="match status" value="1"/>
</dbReference>
<dbReference type="PROSITE" id="PS51002">
    <property type="entry name" value="CYTB_NTER"/>
    <property type="match status" value="1"/>
</dbReference>
<comment type="function">
    <text evidence="2">Component of the ubiquinol-cytochrome c reductase complex (complex III or cytochrome b-c1 complex) that is part of the mitochondrial respiratory chain. The b-c1 complex mediates electron transfer from ubiquinol to cytochrome c. Contributes to the generation of a proton gradient across the mitochondrial membrane that is then used for ATP synthesis.</text>
</comment>
<comment type="cofactor">
    <cofactor evidence="2">
        <name>heme b</name>
        <dbReference type="ChEBI" id="CHEBI:60344"/>
    </cofactor>
    <text evidence="2">Binds 2 heme b groups non-covalently.</text>
</comment>
<comment type="subunit">
    <text evidence="2">The cytochrome bc1 complex contains 11 subunits: 3 respiratory subunits (MT-CYB, CYC1 and UQCRFS1), 2 core proteins (UQCRC1 and UQCRC2) and 6 low-molecular weight proteins (UQCRH/QCR6, UQCRB/QCR7, UQCRQ/QCR8, UQCR10/QCR9, UQCR11/QCR10 and a cleavage product of UQCRFS1). This cytochrome bc1 complex then forms a dimer.</text>
</comment>
<comment type="subcellular location">
    <subcellularLocation>
        <location evidence="2">Mitochondrion inner membrane</location>
        <topology evidence="2">Multi-pass membrane protein</topology>
    </subcellularLocation>
</comment>
<comment type="miscellaneous">
    <text evidence="1">Heme 1 (or BL or b562) is low-potential and absorbs at about 562 nm, and heme 2 (or BH or b566) is high-potential and absorbs at about 566 nm.</text>
</comment>
<comment type="similarity">
    <text evidence="3 4">Belongs to the cytochrome b family.</text>
</comment>
<comment type="caution">
    <text evidence="2">The full-length protein contains only eight transmembrane helices, not nine as predicted by bioinformatics tools.</text>
</comment>
<sequence length="379" mass="42554">MKILRKNHPLLKIVNHSFIDLPTPSNISSWWNFGSLLGMCLVIQILTGLFLAMHYTSDTTTAFSSVAHICRDVNYGWLIRYLHANGASMFFICLFIHVGRGIYYGSYVLSETWNIGIILLLTTMATAFVGYVLPWGQMSFWGATVITNLLSAIPYIGNTLVEWIWGGFSVDKATLTRFFAFHFILPFIIAAFALVHLLFLHETGSNNPSGLNSDSDKIPFHPYYTTKDLLGIFLLLLVLMILALFFPDVLGDPDNFTPANPLNTPAHIKPEWYFLFAYAILRSIPNKLGGVLALVLSILILATFPLLNTSKQHGLIFRPVTQVIYWIFIANLLVLTWIGGQPVEYPFTTIGQIASITYFTIIIILIPVSNTIENNIIKL</sequence>
<organism>
    <name type="scientific">Akodon mystax</name>
    <name type="common">Caparao grass mouse</name>
    <dbReference type="NCBI Taxonomy" id="106113"/>
    <lineage>
        <taxon>Eukaryota</taxon>
        <taxon>Metazoa</taxon>
        <taxon>Chordata</taxon>
        <taxon>Craniata</taxon>
        <taxon>Vertebrata</taxon>
        <taxon>Euteleostomi</taxon>
        <taxon>Mammalia</taxon>
        <taxon>Eutheria</taxon>
        <taxon>Euarchontoglires</taxon>
        <taxon>Glires</taxon>
        <taxon>Rodentia</taxon>
        <taxon>Myomorpha</taxon>
        <taxon>Muroidea</taxon>
        <taxon>Cricetidae</taxon>
        <taxon>Sigmodontinae</taxon>
        <taxon>Akodon</taxon>
    </lineage>
</organism>
<evidence type="ECO:0000250" key="1"/>
<evidence type="ECO:0000250" key="2">
    <source>
        <dbReference type="UniProtKB" id="P00157"/>
    </source>
</evidence>
<evidence type="ECO:0000255" key="3">
    <source>
        <dbReference type="PROSITE-ProRule" id="PRU00967"/>
    </source>
</evidence>
<evidence type="ECO:0000255" key="4">
    <source>
        <dbReference type="PROSITE-ProRule" id="PRU00968"/>
    </source>
</evidence>
<keyword id="KW-0249">Electron transport</keyword>
<keyword id="KW-0349">Heme</keyword>
<keyword id="KW-0408">Iron</keyword>
<keyword id="KW-0472">Membrane</keyword>
<keyword id="KW-0479">Metal-binding</keyword>
<keyword id="KW-0496">Mitochondrion</keyword>
<keyword id="KW-0999">Mitochondrion inner membrane</keyword>
<keyword id="KW-0679">Respiratory chain</keyword>
<keyword id="KW-0812">Transmembrane</keyword>
<keyword id="KW-1133">Transmembrane helix</keyword>
<keyword id="KW-0813">Transport</keyword>
<keyword id="KW-0830">Ubiquinone</keyword>
<proteinExistence type="inferred from homology"/>